<protein>
    <recommendedName>
        <fullName>Cation efflux system protein CusC</fullName>
    </recommendedName>
</protein>
<name>CUSC_ECOL6</name>
<dbReference type="EMBL" id="AE014075">
    <property type="protein sequence ID" value="AAN79133.1"/>
    <property type="molecule type" value="Genomic_DNA"/>
</dbReference>
<dbReference type="RefSeq" id="WP_000074211.1">
    <property type="nucleotide sequence ID" value="NZ_CP051263.1"/>
</dbReference>
<dbReference type="SMR" id="Q8CWA4"/>
<dbReference type="STRING" id="199310.c0658"/>
<dbReference type="KEGG" id="ecc:c0658"/>
<dbReference type="eggNOG" id="COG1538">
    <property type="taxonomic scope" value="Bacteria"/>
</dbReference>
<dbReference type="HOGENOM" id="CLU_012817_13_3_6"/>
<dbReference type="BioCyc" id="ECOL199310:C0658-MONOMER"/>
<dbReference type="Proteomes" id="UP000001410">
    <property type="component" value="Chromosome"/>
</dbReference>
<dbReference type="GO" id="GO:0009279">
    <property type="term" value="C:cell outer membrane"/>
    <property type="evidence" value="ECO:0007669"/>
    <property type="project" value="UniProtKB-SubCell"/>
</dbReference>
<dbReference type="GO" id="GO:0046930">
    <property type="term" value="C:pore complex"/>
    <property type="evidence" value="ECO:0007669"/>
    <property type="project" value="UniProtKB-KW"/>
</dbReference>
<dbReference type="GO" id="GO:0019992">
    <property type="term" value="F:diacylglycerol binding"/>
    <property type="evidence" value="ECO:0000250"/>
    <property type="project" value="UniProtKB"/>
</dbReference>
<dbReference type="GO" id="GO:0015562">
    <property type="term" value="F:efflux transmembrane transporter activity"/>
    <property type="evidence" value="ECO:0007669"/>
    <property type="project" value="InterPro"/>
</dbReference>
<dbReference type="GO" id="GO:0015288">
    <property type="term" value="F:porin activity"/>
    <property type="evidence" value="ECO:0007669"/>
    <property type="project" value="UniProtKB-KW"/>
</dbReference>
<dbReference type="GO" id="GO:0006811">
    <property type="term" value="P:monoatomic ion transport"/>
    <property type="evidence" value="ECO:0007669"/>
    <property type="project" value="UniProtKB-KW"/>
</dbReference>
<dbReference type="GO" id="GO:0070207">
    <property type="term" value="P:protein homotrimerization"/>
    <property type="evidence" value="ECO:0000250"/>
    <property type="project" value="UniProtKB"/>
</dbReference>
<dbReference type="Gene3D" id="1.20.1600.10">
    <property type="entry name" value="Outer membrane efflux proteins (OEP)"/>
    <property type="match status" value="1"/>
</dbReference>
<dbReference type="Gene3D" id="2.20.200.10">
    <property type="entry name" value="Outer membrane efflux proteins (OEP)"/>
    <property type="match status" value="1"/>
</dbReference>
<dbReference type="InterPro" id="IPR050737">
    <property type="entry name" value="OMF"/>
</dbReference>
<dbReference type="InterPro" id="IPR003423">
    <property type="entry name" value="OMP_efflux"/>
</dbReference>
<dbReference type="InterPro" id="IPR010131">
    <property type="entry name" value="RND_efflux_OM_lipoprot_NodT"/>
</dbReference>
<dbReference type="NCBIfam" id="TIGR01845">
    <property type="entry name" value="outer_NodT"/>
    <property type="match status" value="1"/>
</dbReference>
<dbReference type="NCBIfam" id="NF007347">
    <property type="entry name" value="PRK09837.1"/>
    <property type="match status" value="1"/>
</dbReference>
<dbReference type="PANTHER" id="PTHR30203:SF32">
    <property type="entry name" value="CATION EFFLUX SYSTEM PROTEIN CUSC"/>
    <property type="match status" value="1"/>
</dbReference>
<dbReference type="PANTHER" id="PTHR30203">
    <property type="entry name" value="OUTER MEMBRANE CATION EFFLUX PROTEIN"/>
    <property type="match status" value="1"/>
</dbReference>
<dbReference type="Pfam" id="PF02321">
    <property type="entry name" value="OEP"/>
    <property type="match status" value="2"/>
</dbReference>
<dbReference type="SUPFAM" id="SSF56954">
    <property type="entry name" value="Outer membrane efflux proteins (OEP)"/>
    <property type="match status" value="1"/>
</dbReference>
<dbReference type="PROSITE" id="PS51257">
    <property type="entry name" value="PROKAR_LIPOPROTEIN"/>
    <property type="match status" value="1"/>
</dbReference>
<sequence length="460" mass="50709">MSPCKLLPFCVALALTGCSLAPDYQRPAMPVPQQFSLSQNGLVNAADNYQNAGWRTFFVDNQVKTLISEALVNNRDLRMAALKVQEARAQYRLTDADRYPQLNGEGSGSWSGNLKGDSATTREFSTGLNASFDLDFFGRLKNMSEAERQNYLATEEAQRAVHILLVSNVAQSYFNQQLAYAQLQIAEETLRNYQQSYAFVEKQLLTGSSNVLALEQARGVIESTRSDIAKRQGELAQANNALQLLLGSYGKLPQAQTVNSDSLQSVKLPAGLPSQILLQRPDIMEAEHALMAANANIGAARAAFFPSISLTSGISTASSDLSSLFNASSGMWNFIPKIEIPIFNAGRNQANLDIAEIRQQQSVVNYEQKIQNAFKEVADALALRQSLNDQISAQQRYLASLQITLQRARTLYQHGAVSYLEVLDAERSLFATRQTLLDLNYARQVNEISLYTALGGGWQQ</sequence>
<feature type="signal peptide" evidence="2">
    <location>
        <begin position="1"/>
        <end position="17"/>
    </location>
</feature>
<feature type="chain" id="PRO_0000030994" description="Cation efflux system protein CusC">
    <location>
        <begin position="18"/>
        <end position="460"/>
    </location>
</feature>
<feature type="lipid moiety-binding region" description="N-palmitoyl cysteine" evidence="2">
    <location>
        <position position="18"/>
    </location>
</feature>
<feature type="lipid moiety-binding region" description="S-diacylglycerol cysteine" evidence="2">
    <location>
        <position position="18"/>
    </location>
</feature>
<organism>
    <name type="scientific">Escherichia coli O6:H1 (strain CFT073 / ATCC 700928 / UPEC)</name>
    <dbReference type="NCBI Taxonomy" id="199310"/>
    <lineage>
        <taxon>Bacteria</taxon>
        <taxon>Pseudomonadati</taxon>
        <taxon>Pseudomonadota</taxon>
        <taxon>Gammaproteobacteria</taxon>
        <taxon>Enterobacterales</taxon>
        <taxon>Enterobacteriaceae</taxon>
        <taxon>Escherichia</taxon>
    </lineage>
</organism>
<keyword id="KW-0998">Cell outer membrane</keyword>
<keyword id="KW-0406">Ion transport</keyword>
<keyword id="KW-0449">Lipoprotein</keyword>
<keyword id="KW-0472">Membrane</keyword>
<keyword id="KW-0564">Palmitate</keyword>
<keyword id="KW-0626">Porin</keyword>
<keyword id="KW-1185">Reference proteome</keyword>
<keyword id="KW-0732">Signal</keyword>
<keyword id="KW-0812">Transmembrane</keyword>
<keyword id="KW-1134">Transmembrane beta strand</keyword>
<keyword id="KW-0813">Transport</keyword>
<gene>
    <name type="primary">cusC</name>
    <name type="ordered locus">c0658</name>
</gene>
<evidence type="ECO:0000250" key="1"/>
<evidence type="ECO:0000255" key="2">
    <source>
        <dbReference type="PROSITE-ProRule" id="PRU00303"/>
    </source>
</evidence>
<evidence type="ECO:0000305" key="3"/>
<comment type="function">
    <text evidence="1">Forms pores that allow passive diffusion of cations across the outer membrane. Part of a cation efflux system that mediates resistance to copper and silver (By similarity).</text>
</comment>
<comment type="subunit">
    <text evidence="1">Homotrimer. Component of the cus efflux system composed of CusA, CusB, CusC and CusF (By similarity).</text>
</comment>
<comment type="subcellular location">
    <subcellularLocation>
        <location evidence="1">Cell outer membrane</location>
        <topology evidence="1">Multi-pass membrane protein</topology>
    </subcellularLocation>
    <subcellularLocation>
        <location evidence="1">Cell outer membrane</location>
        <topology evidence="2">Lipid-anchor</topology>
    </subcellularLocation>
</comment>
<comment type="induction">
    <text evidence="3">Transcriptionally regulated by CusR in response to copper and silver ions.</text>
</comment>
<comment type="similarity">
    <text evidence="3">Belongs to the outer membrane factor (OMF) (TC 1.B.17) family.</text>
</comment>
<proteinExistence type="inferred from homology"/>
<accession>Q8CWA4</accession>
<reference key="1">
    <citation type="journal article" date="2002" name="Proc. Natl. Acad. Sci. U.S.A.">
        <title>Extensive mosaic structure revealed by the complete genome sequence of uropathogenic Escherichia coli.</title>
        <authorList>
            <person name="Welch R.A."/>
            <person name="Burland V."/>
            <person name="Plunkett G. III"/>
            <person name="Redford P."/>
            <person name="Roesch P."/>
            <person name="Rasko D."/>
            <person name="Buckles E.L."/>
            <person name="Liou S.-R."/>
            <person name="Boutin A."/>
            <person name="Hackett J."/>
            <person name="Stroud D."/>
            <person name="Mayhew G.F."/>
            <person name="Rose D.J."/>
            <person name="Zhou S."/>
            <person name="Schwartz D.C."/>
            <person name="Perna N.T."/>
            <person name="Mobley H.L.T."/>
            <person name="Donnenberg M.S."/>
            <person name="Blattner F.R."/>
        </authorList>
    </citation>
    <scope>NUCLEOTIDE SEQUENCE [LARGE SCALE GENOMIC DNA]</scope>
    <source>
        <strain>CFT073 / ATCC 700928 / UPEC</strain>
    </source>
</reference>